<feature type="signal peptide" evidence="1">
    <location>
        <begin position="1"/>
        <end position="22"/>
    </location>
</feature>
<feature type="chain" id="PRO_0000020408" description="Membrane protein insertase YidC 2">
    <location>
        <begin position="23"/>
        <end position="276"/>
    </location>
</feature>
<feature type="transmembrane region" description="Helical" evidence="1">
    <location>
        <begin position="58"/>
        <end position="78"/>
    </location>
</feature>
<feature type="transmembrane region" description="Helical" evidence="1">
    <location>
        <begin position="130"/>
        <end position="150"/>
    </location>
</feature>
<feature type="transmembrane region" description="Helical" evidence="1">
    <location>
        <begin position="169"/>
        <end position="189"/>
    </location>
</feature>
<feature type="transmembrane region" description="Helical" evidence="1">
    <location>
        <begin position="207"/>
        <end position="227"/>
    </location>
</feature>
<feature type="lipid moiety-binding region" description="N-palmitoyl cysteine" evidence="1">
    <location>
        <position position="23"/>
    </location>
</feature>
<feature type="lipid moiety-binding region" description="S-diacylglycerol cysteine" evidence="1">
    <location>
        <position position="23"/>
    </location>
</feature>
<comment type="function">
    <text evidence="1">Required for the insertion and/or proper folding and/or complex formation of integral membrane proteins into the membrane. Involved in integration of membrane proteins that insert both dependently and independently of the Sec translocase complex, as well as at least some lipoproteins.</text>
</comment>
<comment type="subunit">
    <text evidence="2">Interacts with KhpB (also called EloR/Jag).</text>
</comment>
<comment type="subcellular location">
    <subcellularLocation>
        <location evidence="1">Cell membrane</location>
        <topology evidence="1">Multi-pass membrane protein</topology>
    </subcellularLocation>
</comment>
<comment type="disruption phenotype">
    <text evidence="2">Alters the localization of KhpB which localizes not only to the midcell but also the old cell poles. No change in localization of MltG.</text>
</comment>
<comment type="similarity">
    <text evidence="1">Belongs to the OXA1/ALB3/YidC family. Type 2 subfamily.</text>
</comment>
<gene>
    <name evidence="1" type="primary">yidC2</name>
    <name type="ordered locus">spr1852</name>
</gene>
<name>YIDC2_STRR6</name>
<dbReference type="EMBL" id="AE007317">
    <property type="protein sequence ID" value="AAL00655.1"/>
    <property type="molecule type" value="Genomic_DNA"/>
</dbReference>
<dbReference type="PIR" id="B98103">
    <property type="entry name" value="B98103"/>
</dbReference>
<dbReference type="RefSeq" id="NP_359444.1">
    <property type="nucleotide sequence ID" value="NC_003098.1"/>
</dbReference>
<dbReference type="SMR" id="Q8DN93"/>
<dbReference type="STRING" id="171101.spr1852"/>
<dbReference type="KEGG" id="spr:spr1852"/>
<dbReference type="PATRIC" id="fig|171101.6.peg.1998"/>
<dbReference type="eggNOG" id="COG0706">
    <property type="taxonomic scope" value="Bacteria"/>
</dbReference>
<dbReference type="HOGENOM" id="CLU_036138_5_0_9"/>
<dbReference type="Proteomes" id="UP000000586">
    <property type="component" value="Chromosome"/>
</dbReference>
<dbReference type="GO" id="GO:0005886">
    <property type="term" value="C:plasma membrane"/>
    <property type="evidence" value="ECO:0000318"/>
    <property type="project" value="GO_Central"/>
</dbReference>
<dbReference type="GO" id="GO:0032977">
    <property type="term" value="F:membrane insertase activity"/>
    <property type="evidence" value="ECO:0000318"/>
    <property type="project" value="GO_Central"/>
</dbReference>
<dbReference type="GO" id="GO:0051205">
    <property type="term" value="P:protein insertion into membrane"/>
    <property type="evidence" value="ECO:0000318"/>
    <property type="project" value="GO_Central"/>
</dbReference>
<dbReference type="GO" id="GO:0015031">
    <property type="term" value="P:protein transport"/>
    <property type="evidence" value="ECO:0007669"/>
    <property type="project" value="UniProtKB-KW"/>
</dbReference>
<dbReference type="CDD" id="cd20070">
    <property type="entry name" value="5TM_YidC_Alb3"/>
    <property type="match status" value="1"/>
</dbReference>
<dbReference type="HAMAP" id="MF_01811">
    <property type="entry name" value="YidC_type2"/>
    <property type="match status" value="1"/>
</dbReference>
<dbReference type="InterPro" id="IPR001708">
    <property type="entry name" value="YidC/ALB3/OXA1/COX18"/>
</dbReference>
<dbReference type="InterPro" id="IPR028055">
    <property type="entry name" value="YidC/Oxa/ALB_C"/>
</dbReference>
<dbReference type="InterPro" id="IPR023060">
    <property type="entry name" value="YidC/YidC1/YidC2_Firmicutes"/>
</dbReference>
<dbReference type="InterPro" id="IPR047196">
    <property type="entry name" value="YidC_ALB_C"/>
</dbReference>
<dbReference type="NCBIfam" id="TIGR03592">
    <property type="entry name" value="yidC_oxa1_cterm"/>
    <property type="match status" value="1"/>
</dbReference>
<dbReference type="PANTHER" id="PTHR12428:SF65">
    <property type="entry name" value="CYTOCHROME C OXIDASE ASSEMBLY PROTEIN COX18, MITOCHONDRIAL"/>
    <property type="match status" value="1"/>
</dbReference>
<dbReference type="PANTHER" id="PTHR12428">
    <property type="entry name" value="OXA1"/>
    <property type="match status" value="1"/>
</dbReference>
<dbReference type="Pfam" id="PF02096">
    <property type="entry name" value="60KD_IMP"/>
    <property type="match status" value="1"/>
</dbReference>
<dbReference type="PRINTS" id="PR00701">
    <property type="entry name" value="60KDINNERMP"/>
</dbReference>
<dbReference type="PROSITE" id="PS51257">
    <property type="entry name" value="PROKAR_LIPOPROTEIN"/>
    <property type="match status" value="1"/>
</dbReference>
<organism>
    <name type="scientific">Streptococcus pneumoniae (strain ATCC BAA-255 / R6)</name>
    <dbReference type="NCBI Taxonomy" id="171101"/>
    <lineage>
        <taxon>Bacteria</taxon>
        <taxon>Bacillati</taxon>
        <taxon>Bacillota</taxon>
        <taxon>Bacilli</taxon>
        <taxon>Lactobacillales</taxon>
        <taxon>Streptococcaceae</taxon>
        <taxon>Streptococcus</taxon>
    </lineage>
</organism>
<reference key="1">
    <citation type="journal article" date="2001" name="J. Bacteriol.">
        <title>Genome of the bacterium Streptococcus pneumoniae strain R6.</title>
        <authorList>
            <person name="Hoskins J."/>
            <person name="Alborn W.E. Jr."/>
            <person name="Arnold J."/>
            <person name="Blaszczak L.C."/>
            <person name="Burgett S."/>
            <person name="DeHoff B.S."/>
            <person name="Estrem S.T."/>
            <person name="Fritz L."/>
            <person name="Fu D.-J."/>
            <person name="Fuller W."/>
            <person name="Geringer C."/>
            <person name="Gilmour R."/>
            <person name="Glass J.S."/>
            <person name="Khoja H."/>
            <person name="Kraft A.R."/>
            <person name="Lagace R.E."/>
            <person name="LeBlanc D.J."/>
            <person name="Lee L.N."/>
            <person name="Lefkowitz E.J."/>
            <person name="Lu J."/>
            <person name="Matsushima P."/>
            <person name="McAhren S.M."/>
            <person name="McHenney M."/>
            <person name="McLeaster K."/>
            <person name="Mundy C.W."/>
            <person name="Nicas T.I."/>
            <person name="Norris F.H."/>
            <person name="O'Gara M."/>
            <person name="Peery R.B."/>
            <person name="Robertson G.T."/>
            <person name="Rockey P."/>
            <person name="Sun P.-M."/>
            <person name="Winkler M.E."/>
            <person name="Yang Y."/>
            <person name="Young-Bellido M."/>
            <person name="Zhao G."/>
            <person name="Zook C.A."/>
            <person name="Baltz R.H."/>
            <person name="Jaskunas S.R."/>
            <person name="Rosteck P.R. Jr."/>
            <person name="Skatrud P.L."/>
            <person name="Glass J.I."/>
        </authorList>
    </citation>
    <scope>NUCLEOTIDE SEQUENCE [LARGE SCALE GENOMIC DNA]</scope>
    <source>
        <strain>ATCC BAA-255 / R6</strain>
    </source>
</reference>
<reference key="2">
    <citation type="journal article" date="2021" name="J. Bacteriol.">
        <title>EloR interacts with the lytic transglycosylase MltG at midcell in Streptococcus pneumoniae R6.</title>
        <authorList>
            <person name="Winther A.R."/>
            <person name="Kjos M."/>
            <person name="Herigstad M.L."/>
            <person name="Haavarstein L.S."/>
            <person name="Straume D."/>
        </authorList>
    </citation>
    <scope>INTERACTION WITH KHPB</scope>
    <scope>DISRUPTION PHENOTYPE</scope>
    <source>
        <strain>R6 / R704</strain>
    </source>
</reference>
<evidence type="ECO:0000255" key="1">
    <source>
        <dbReference type="HAMAP-Rule" id="MF_01811"/>
    </source>
</evidence>
<evidence type="ECO:0000269" key="2">
    <source>
    </source>
</evidence>
<protein>
    <recommendedName>
        <fullName evidence="1">Membrane protein insertase YidC 2</fullName>
    </recommendedName>
    <alternativeName>
        <fullName evidence="1">Foldase YidC 2</fullName>
    </alternativeName>
    <alternativeName>
        <fullName evidence="1">Membrane integrase YidC 2</fullName>
    </alternativeName>
    <alternativeName>
        <fullName evidence="1">Membrane protein YidC 2</fullName>
    </alternativeName>
</protein>
<sequence>MGVKKKLKLTSLLGLSLLIMTACATNGVTSDITAESADFWSKLVYFFAEIIRFLSFDISIGVGIILFTVLIRTVLLPVFQVQMVASRKMQEAQPRIKALREQYPGRDMESRTKLEQEMRKVFKEMGVRQSDSLWPILIQMPVILALFQALSRVDFLKTGHFLWINLGSVDTTLVLPILAAVFTFLSTWLSNKALSERNGATTAMMYGIPVLIFIFAVYAPGGVALYWTVSNAYQVLQTYFLNNPFKIIAEREAVVQAQKDLENRKRKAKKKAQKTK</sequence>
<accession>Q8DN93</accession>
<proteinExistence type="evidence at protein level"/>
<keyword id="KW-1003">Cell membrane</keyword>
<keyword id="KW-0143">Chaperone</keyword>
<keyword id="KW-0449">Lipoprotein</keyword>
<keyword id="KW-0472">Membrane</keyword>
<keyword id="KW-0564">Palmitate</keyword>
<keyword id="KW-0653">Protein transport</keyword>
<keyword id="KW-1185">Reference proteome</keyword>
<keyword id="KW-0732">Signal</keyword>
<keyword id="KW-0812">Transmembrane</keyword>
<keyword id="KW-1133">Transmembrane helix</keyword>
<keyword id="KW-0813">Transport</keyword>